<dbReference type="EC" id="2.5.1.141" evidence="1"/>
<dbReference type="EMBL" id="AE008922">
    <property type="protein sequence ID" value="AAM43060.1"/>
    <property type="status" value="ALT_INIT"/>
    <property type="molecule type" value="Genomic_DNA"/>
</dbReference>
<dbReference type="RefSeq" id="NP_639169.1">
    <property type="nucleotide sequence ID" value="NC_003902.1"/>
</dbReference>
<dbReference type="RefSeq" id="WP_014506322.1">
    <property type="nucleotide sequence ID" value="NC_003902.1"/>
</dbReference>
<dbReference type="SMR" id="Q8P487"/>
<dbReference type="STRING" id="190485.XCC3824"/>
<dbReference type="EnsemblBacteria" id="AAM43060">
    <property type="protein sequence ID" value="AAM43060"/>
    <property type="gene ID" value="XCC3824"/>
</dbReference>
<dbReference type="GeneID" id="58015113"/>
<dbReference type="KEGG" id="xcc:XCC3824"/>
<dbReference type="PATRIC" id="fig|190485.4.peg.4096"/>
<dbReference type="eggNOG" id="COG0109">
    <property type="taxonomic scope" value="Bacteria"/>
</dbReference>
<dbReference type="HOGENOM" id="CLU_029631_0_2_6"/>
<dbReference type="OrthoDB" id="9814417at2"/>
<dbReference type="UniPathway" id="UPA00834">
    <property type="reaction ID" value="UER00712"/>
</dbReference>
<dbReference type="Proteomes" id="UP000001010">
    <property type="component" value="Chromosome"/>
</dbReference>
<dbReference type="GO" id="GO:0005886">
    <property type="term" value="C:plasma membrane"/>
    <property type="evidence" value="ECO:0007669"/>
    <property type="project" value="UniProtKB-SubCell"/>
</dbReference>
<dbReference type="GO" id="GO:0008495">
    <property type="term" value="F:protoheme IX farnesyltransferase activity"/>
    <property type="evidence" value="ECO:0000318"/>
    <property type="project" value="GO_Central"/>
</dbReference>
<dbReference type="GO" id="GO:0006783">
    <property type="term" value="P:heme biosynthetic process"/>
    <property type="evidence" value="ECO:0000318"/>
    <property type="project" value="GO_Central"/>
</dbReference>
<dbReference type="GO" id="GO:0048034">
    <property type="term" value="P:heme O biosynthetic process"/>
    <property type="evidence" value="ECO:0007669"/>
    <property type="project" value="UniProtKB-UniRule"/>
</dbReference>
<dbReference type="CDD" id="cd13957">
    <property type="entry name" value="PT_UbiA_Cox10"/>
    <property type="match status" value="1"/>
</dbReference>
<dbReference type="FunFam" id="1.10.357.140:FF:000001">
    <property type="entry name" value="Protoheme IX farnesyltransferase"/>
    <property type="match status" value="1"/>
</dbReference>
<dbReference type="Gene3D" id="1.10.357.140">
    <property type="entry name" value="UbiA prenyltransferase"/>
    <property type="match status" value="1"/>
</dbReference>
<dbReference type="HAMAP" id="MF_00154">
    <property type="entry name" value="CyoE_CtaB"/>
    <property type="match status" value="1"/>
</dbReference>
<dbReference type="InterPro" id="IPR006369">
    <property type="entry name" value="Protohaem_IX_farnesylTrfase"/>
</dbReference>
<dbReference type="InterPro" id="IPR000537">
    <property type="entry name" value="UbiA_prenyltransferase"/>
</dbReference>
<dbReference type="InterPro" id="IPR030470">
    <property type="entry name" value="UbiA_prenylTrfase_CS"/>
</dbReference>
<dbReference type="InterPro" id="IPR044878">
    <property type="entry name" value="UbiA_sf"/>
</dbReference>
<dbReference type="NCBIfam" id="TIGR01473">
    <property type="entry name" value="cyoE_ctaB"/>
    <property type="match status" value="1"/>
</dbReference>
<dbReference type="NCBIfam" id="NF003349">
    <property type="entry name" value="PRK04375.1-2"/>
    <property type="match status" value="1"/>
</dbReference>
<dbReference type="PANTHER" id="PTHR43448:SF7">
    <property type="entry name" value="4-HYDROXYBENZOATE SOLANESYLTRANSFERASE"/>
    <property type="match status" value="1"/>
</dbReference>
<dbReference type="PANTHER" id="PTHR43448">
    <property type="entry name" value="PROTOHEME IX FARNESYLTRANSFERASE, MITOCHONDRIAL"/>
    <property type="match status" value="1"/>
</dbReference>
<dbReference type="Pfam" id="PF01040">
    <property type="entry name" value="UbiA"/>
    <property type="match status" value="1"/>
</dbReference>
<dbReference type="PROSITE" id="PS00943">
    <property type="entry name" value="UBIA"/>
    <property type="match status" value="1"/>
</dbReference>
<proteinExistence type="inferred from homology"/>
<name>CYOE_XANCP</name>
<protein>
    <recommendedName>
        <fullName evidence="1">Protoheme IX farnesyltransferase</fullName>
        <ecNumber evidence="1">2.5.1.141</ecNumber>
    </recommendedName>
    <alternativeName>
        <fullName evidence="1">Heme B farnesyltransferase</fullName>
    </alternativeName>
    <alternativeName>
        <fullName evidence="1">Heme O synthase</fullName>
    </alternativeName>
</protein>
<gene>
    <name evidence="1" type="primary">cyoE</name>
    <name type="synonym">coxD</name>
    <name type="ordered locus">XCC3824</name>
</gene>
<organism>
    <name type="scientific">Xanthomonas campestris pv. campestris (strain ATCC 33913 / DSM 3586 / NCPPB 528 / LMG 568 / P 25)</name>
    <dbReference type="NCBI Taxonomy" id="190485"/>
    <lineage>
        <taxon>Bacteria</taxon>
        <taxon>Pseudomonadati</taxon>
        <taxon>Pseudomonadota</taxon>
        <taxon>Gammaproteobacteria</taxon>
        <taxon>Lysobacterales</taxon>
        <taxon>Lysobacteraceae</taxon>
        <taxon>Xanthomonas</taxon>
    </lineage>
</organism>
<sequence>MAVSARDYWDLTKPKVVALIVFTALVGMFLAIPGMPTWLQVRTGALGFLGIWLAASAAAAINQLLDAKIDAQMARTSWRPLVVGKVRPAQVLAFASVLIVISMTILVVWVNVITAVLTFASLIGYAVIYTVYLKRATSQNIVIGGLAGATPPMLGWAAVTGLPTSADWINASLLVLIIFIWTPPHFWALAIFRRADYAKAAIPMLPVTHGVPHTRKQILVYTVLLAIVTLLPVAVGMSGVFYLGGAVVLNAVFLWYAWRMLDPPDELFSMKMFGYSVVYLMALFAFLMVDHLLLPWVR</sequence>
<feature type="chain" id="PRO_0000326970" description="Protoheme IX farnesyltransferase">
    <location>
        <begin position="1"/>
        <end position="298"/>
    </location>
</feature>
<feature type="transmembrane region" description="Helical" evidence="1">
    <location>
        <begin position="16"/>
        <end position="36"/>
    </location>
</feature>
<feature type="transmembrane region" description="Helical" evidence="1">
    <location>
        <begin position="45"/>
        <end position="65"/>
    </location>
</feature>
<feature type="transmembrane region" description="Helical" evidence="1">
    <location>
        <begin position="97"/>
        <end position="117"/>
    </location>
</feature>
<feature type="transmembrane region" description="Helical" evidence="1">
    <location>
        <begin position="141"/>
        <end position="161"/>
    </location>
</feature>
<feature type="transmembrane region" description="Helical" evidence="1">
    <location>
        <begin position="172"/>
        <end position="192"/>
    </location>
</feature>
<feature type="transmembrane region" description="Helical" evidence="1">
    <location>
        <begin position="223"/>
        <end position="243"/>
    </location>
</feature>
<feature type="transmembrane region" description="Helical" evidence="1">
    <location>
        <begin position="244"/>
        <end position="264"/>
    </location>
</feature>
<feature type="transmembrane region" description="Helical" evidence="1">
    <location>
        <begin position="277"/>
        <end position="297"/>
    </location>
</feature>
<keyword id="KW-0997">Cell inner membrane</keyword>
<keyword id="KW-1003">Cell membrane</keyword>
<keyword id="KW-0350">Heme biosynthesis</keyword>
<keyword id="KW-0472">Membrane</keyword>
<keyword id="KW-1185">Reference proteome</keyword>
<keyword id="KW-0808">Transferase</keyword>
<keyword id="KW-0812">Transmembrane</keyword>
<keyword id="KW-1133">Transmembrane helix</keyword>
<accession>Q8P487</accession>
<evidence type="ECO:0000255" key="1">
    <source>
        <dbReference type="HAMAP-Rule" id="MF_00154"/>
    </source>
</evidence>
<evidence type="ECO:0000305" key="2"/>
<comment type="function">
    <text evidence="1">Converts heme B (protoheme IX) to heme O by substitution of the vinyl group on carbon 2 of heme B porphyrin ring with a hydroxyethyl farnesyl side group.</text>
</comment>
<comment type="catalytic activity">
    <reaction evidence="1">
        <text>heme b + (2E,6E)-farnesyl diphosphate + H2O = Fe(II)-heme o + diphosphate</text>
        <dbReference type="Rhea" id="RHEA:28070"/>
        <dbReference type="ChEBI" id="CHEBI:15377"/>
        <dbReference type="ChEBI" id="CHEBI:33019"/>
        <dbReference type="ChEBI" id="CHEBI:60344"/>
        <dbReference type="ChEBI" id="CHEBI:60530"/>
        <dbReference type="ChEBI" id="CHEBI:175763"/>
        <dbReference type="EC" id="2.5.1.141"/>
    </reaction>
</comment>
<comment type="pathway">
    <text evidence="1">Porphyrin-containing compound metabolism; heme O biosynthesis; heme O from protoheme: step 1/1.</text>
</comment>
<comment type="subcellular location">
    <subcellularLocation>
        <location evidence="1">Cell inner membrane</location>
        <topology evidence="1">Multi-pass membrane protein</topology>
    </subcellularLocation>
</comment>
<comment type="miscellaneous">
    <text evidence="1">Carbon 2 of the heme B porphyrin ring is defined according to the Fischer nomenclature.</text>
</comment>
<comment type="similarity">
    <text evidence="1">Belongs to the UbiA prenyltransferase family. Protoheme IX farnesyltransferase subfamily.</text>
</comment>
<comment type="sequence caution" evidence="2">
    <conflict type="erroneous initiation">
        <sequence resource="EMBL-CDS" id="AAM43060"/>
    </conflict>
</comment>
<reference key="1">
    <citation type="journal article" date="2002" name="Nature">
        <title>Comparison of the genomes of two Xanthomonas pathogens with differing host specificities.</title>
        <authorList>
            <person name="da Silva A.C.R."/>
            <person name="Ferro J.A."/>
            <person name="Reinach F.C."/>
            <person name="Farah C.S."/>
            <person name="Furlan L.R."/>
            <person name="Quaggio R.B."/>
            <person name="Monteiro-Vitorello C.B."/>
            <person name="Van Sluys M.A."/>
            <person name="Almeida N.F. Jr."/>
            <person name="Alves L.M.C."/>
            <person name="do Amaral A.M."/>
            <person name="Bertolini M.C."/>
            <person name="Camargo L.E.A."/>
            <person name="Camarotte G."/>
            <person name="Cannavan F."/>
            <person name="Cardozo J."/>
            <person name="Chambergo F."/>
            <person name="Ciapina L.P."/>
            <person name="Cicarelli R.M.B."/>
            <person name="Coutinho L.L."/>
            <person name="Cursino-Santos J.R."/>
            <person name="El-Dorry H."/>
            <person name="Faria J.B."/>
            <person name="Ferreira A.J.S."/>
            <person name="Ferreira R.C.C."/>
            <person name="Ferro M.I.T."/>
            <person name="Formighieri E.F."/>
            <person name="Franco M.C."/>
            <person name="Greggio C.C."/>
            <person name="Gruber A."/>
            <person name="Katsuyama A.M."/>
            <person name="Kishi L.T."/>
            <person name="Leite R.P."/>
            <person name="Lemos E.G.M."/>
            <person name="Lemos M.V.F."/>
            <person name="Locali E.C."/>
            <person name="Machado M.A."/>
            <person name="Madeira A.M.B.N."/>
            <person name="Martinez-Rossi N.M."/>
            <person name="Martins E.C."/>
            <person name="Meidanis J."/>
            <person name="Menck C.F.M."/>
            <person name="Miyaki C.Y."/>
            <person name="Moon D.H."/>
            <person name="Moreira L.M."/>
            <person name="Novo M.T.M."/>
            <person name="Okura V.K."/>
            <person name="Oliveira M.C."/>
            <person name="Oliveira V.R."/>
            <person name="Pereira H.A."/>
            <person name="Rossi A."/>
            <person name="Sena J.A.D."/>
            <person name="Silva C."/>
            <person name="de Souza R.F."/>
            <person name="Spinola L.A.F."/>
            <person name="Takita M.A."/>
            <person name="Tamura R.E."/>
            <person name="Teixeira E.C."/>
            <person name="Tezza R.I.D."/>
            <person name="Trindade dos Santos M."/>
            <person name="Truffi D."/>
            <person name="Tsai S.M."/>
            <person name="White F.F."/>
            <person name="Setubal J.C."/>
            <person name="Kitajima J.P."/>
        </authorList>
    </citation>
    <scope>NUCLEOTIDE SEQUENCE [LARGE SCALE GENOMIC DNA]</scope>
    <source>
        <strain>ATCC 33913 / DSM 3586 / NCPPB 528 / LMG 568 / P 25</strain>
    </source>
</reference>